<comment type="function">
    <text evidence="1">Produces ATP from ADP in the presence of a proton gradient across the membrane. The catalytic sites are hosted primarily by the beta subunits.</text>
</comment>
<comment type="catalytic activity">
    <reaction evidence="1">
        <text>ATP + H2O + 4 H(+)(in) = ADP + phosphate + 5 H(+)(out)</text>
        <dbReference type="Rhea" id="RHEA:57720"/>
        <dbReference type="ChEBI" id="CHEBI:15377"/>
        <dbReference type="ChEBI" id="CHEBI:15378"/>
        <dbReference type="ChEBI" id="CHEBI:30616"/>
        <dbReference type="ChEBI" id="CHEBI:43474"/>
        <dbReference type="ChEBI" id="CHEBI:456216"/>
        <dbReference type="EC" id="7.1.2.2"/>
    </reaction>
</comment>
<comment type="subunit">
    <text evidence="1">F-type ATPases have 2 components, CF(1) - the catalytic core - and CF(0) - the membrane proton channel. CF(1) has five subunits: alpha(3), beta(3), gamma(1), delta(1), epsilon(1). CF(0) has three main subunits: a(1), b(2) and c(9-12). The alpha and beta chains form an alternating ring which encloses part of the gamma chain. CF(1) is attached to CF(0) by a central stalk formed by the gamma and epsilon chains, while a peripheral stalk is formed by the delta and b chains.</text>
</comment>
<comment type="subcellular location">
    <subcellularLocation>
        <location evidence="1">Cell membrane</location>
        <topology evidence="1">Peripheral membrane protein</topology>
    </subcellularLocation>
</comment>
<comment type="similarity">
    <text evidence="1">Belongs to the ATPase alpha/beta chains family.</text>
</comment>
<name>ATPB_ACIC1</name>
<sequence>MTATIDNTQSQATTGGVGRVARVIGPVVDVEFAADELPEIYNALTVDVDFATASEQVEGETKRTLTLEVAQHIGDNMVRAISLQPTDGLVRGALVRDTGAPISVPVGDVTKGHVFNVLGQTLDVPRIEVTERWPIHRPAPAFDQLEAKTEMLETGIKVIDLLTPYVRGGKIGLFGGAGVGKTVLIQEMIHRVAKNFGGVSVFAGVGERTREGNDLFLEMTESGVINDTVLVFGQMDEPPGCRLRVGLAALTMAEYFRDVKRQDVLLFIDNIFRFVQAGSEVSTLLGRMPSAVGYQPTLADEMGALQERITSTRGHSITSVQAIYVPADDITDPAPHTTFTHLDATTVLSRPISEKGIYPAVDPLDSTSRILDPQFIGEEHFRVANQVKQILQRYKDLQDIIAILGIDELSEEDKVIVGRARRIERFLSQNMFVAEAFTGQPGSFVPLDETIDAFRRLCEGELDHLPEQAFFMCGGLDDVQAKAKRLAERS</sequence>
<protein>
    <recommendedName>
        <fullName evidence="1">ATP synthase subunit beta</fullName>
        <ecNumber evidence="1">7.1.2.2</ecNumber>
    </recommendedName>
    <alternativeName>
        <fullName evidence="1">ATP synthase F1 sector subunit beta</fullName>
    </alternativeName>
    <alternativeName>
        <fullName evidence="1">F-ATPase subunit beta</fullName>
    </alternativeName>
</protein>
<evidence type="ECO:0000255" key="1">
    <source>
        <dbReference type="HAMAP-Rule" id="MF_01347"/>
    </source>
</evidence>
<dbReference type="EC" id="7.1.2.2" evidence="1"/>
<dbReference type="EMBL" id="CP000481">
    <property type="protein sequence ID" value="ABK52426.1"/>
    <property type="molecule type" value="Genomic_DNA"/>
</dbReference>
<dbReference type="RefSeq" id="WP_011719489.1">
    <property type="nucleotide sequence ID" value="NC_008578.1"/>
</dbReference>
<dbReference type="SMR" id="A0LSL6"/>
<dbReference type="FunCoup" id="A0LSL6">
    <property type="interactions" value="248"/>
</dbReference>
<dbReference type="STRING" id="351607.Acel_0653"/>
<dbReference type="KEGG" id="ace:Acel_0653"/>
<dbReference type="eggNOG" id="COG0055">
    <property type="taxonomic scope" value="Bacteria"/>
</dbReference>
<dbReference type="HOGENOM" id="CLU_022398_0_2_11"/>
<dbReference type="InParanoid" id="A0LSL6"/>
<dbReference type="OrthoDB" id="9801639at2"/>
<dbReference type="Proteomes" id="UP000008221">
    <property type="component" value="Chromosome"/>
</dbReference>
<dbReference type="GO" id="GO:0005886">
    <property type="term" value="C:plasma membrane"/>
    <property type="evidence" value="ECO:0007669"/>
    <property type="project" value="UniProtKB-SubCell"/>
</dbReference>
<dbReference type="GO" id="GO:0045259">
    <property type="term" value="C:proton-transporting ATP synthase complex"/>
    <property type="evidence" value="ECO:0007669"/>
    <property type="project" value="UniProtKB-KW"/>
</dbReference>
<dbReference type="GO" id="GO:0005524">
    <property type="term" value="F:ATP binding"/>
    <property type="evidence" value="ECO:0007669"/>
    <property type="project" value="UniProtKB-UniRule"/>
</dbReference>
<dbReference type="GO" id="GO:0016887">
    <property type="term" value="F:ATP hydrolysis activity"/>
    <property type="evidence" value="ECO:0007669"/>
    <property type="project" value="InterPro"/>
</dbReference>
<dbReference type="GO" id="GO:0046933">
    <property type="term" value="F:proton-transporting ATP synthase activity, rotational mechanism"/>
    <property type="evidence" value="ECO:0007669"/>
    <property type="project" value="UniProtKB-UniRule"/>
</dbReference>
<dbReference type="CDD" id="cd18110">
    <property type="entry name" value="ATP-synt_F1_beta_C"/>
    <property type="match status" value="1"/>
</dbReference>
<dbReference type="CDD" id="cd18115">
    <property type="entry name" value="ATP-synt_F1_beta_N"/>
    <property type="match status" value="1"/>
</dbReference>
<dbReference type="CDD" id="cd01133">
    <property type="entry name" value="F1-ATPase_beta_CD"/>
    <property type="match status" value="1"/>
</dbReference>
<dbReference type="FunFam" id="1.10.1140.10:FF:000001">
    <property type="entry name" value="ATP synthase subunit beta"/>
    <property type="match status" value="1"/>
</dbReference>
<dbReference type="FunFam" id="2.40.10.170:FF:000005">
    <property type="entry name" value="ATP synthase subunit beta"/>
    <property type="match status" value="1"/>
</dbReference>
<dbReference type="FunFam" id="3.40.50.300:FF:000004">
    <property type="entry name" value="ATP synthase subunit beta"/>
    <property type="match status" value="1"/>
</dbReference>
<dbReference type="Gene3D" id="2.40.10.170">
    <property type="match status" value="1"/>
</dbReference>
<dbReference type="Gene3D" id="1.10.1140.10">
    <property type="entry name" value="Bovine Mitochondrial F1-atpase, Atp Synthase Beta Chain, Chain D, domain 3"/>
    <property type="match status" value="1"/>
</dbReference>
<dbReference type="Gene3D" id="3.40.50.300">
    <property type="entry name" value="P-loop containing nucleotide triphosphate hydrolases"/>
    <property type="match status" value="1"/>
</dbReference>
<dbReference type="HAMAP" id="MF_01347">
    <property type="entry name" value="ATP_synth_beta_bact"/>
    <property type="match status" value="1"/>
</dbReference>
<dbReference type="InterPro" id="IPR003593">
    <property type="entry name" value="AAA+_ATPase"/>
</dbReference>
<dbReference type="InterPro" id="IPR055190">
    <property type="entry name" value="ATP-synt_VA_C"/>
</dbReference>
<dbReference type="InterPro" id="IPR005722">
    <property type="entry name" value="ATP_synth_F1_bsu"/>
</dbReference>
<dbReference type="InterPro" id="IPR020003">
    <property type="entry name" value="ATPase_a/bsu_AS"/>
</dbReference>
<dbReference type="InterPro" id="IPR050053">
    <property type="entry name" value="ATPase_alpha/beta_chains"/>
</dbReference>
<dbReference type="InterPro" id="IPR004100">
    <property type="entry name" value="ATPase_F1/V1/A1_a/bsu_N"/>
</dbReference>
<dbReference type="InterPro" id="IPR036121">
    <property type="entry name" value="ATPase_F1/V1/A1_a/bsu_N_sf"/>
</dbReference>
<dbReference type="InterPro" id="IPR000194">
    <property type="entry name" value="ATPase_F1/V1/A1_a/bsu_nucl-bd"/>
</dbReference>
<dbReference type="InterPro" id="IPR024034">
    <property type="entry name" value="ATPase_F1/V1_b/a_C"/>
</dbReference>
<dbReference type="InterPro" id="IPR027417">
    <property type="entry name" value="P-loop_NTPase"/>
</dbReference>
<dbReference type="NCBIfam" id="TIGR01039">
    <property type="entry name" value="atpD"/>
    <property type="match status" value="1"/>
</dbReference>
<dbReference type="PANTHER" id="PTHR15184">
    <property type="entry name" value="ATP SYNTHASE"/>
    <property type="match status" value="1"/>
</dbReference>
<dbReference type="PANTHER" id="PTHR15184:SF71">
    <property type="entry name" value="ATP SYNTHASE SUBUNIT BETA, MITOCHONDRIAL"/>
    <property type="match status" value="1"/>
</dbReference>
<dbReference type="Pfam" id="PF00006">
    <property type="entry name" value="ATP-synt_ab"/>
    <property type="match status" value="1"/>
</dbReference>
<dbReference type="Pfam" id="PF02874">
    <property type="entry name" value="ATP-synt_ab_N"/>
    <property type="match status" value="1"/>
</dbReference>
<dbReference type="Pfam" id="PF22919">
    <property type="entry name" value="ATP-synt_VA_C"/>
    <property type="match status" value="1"/>
</dbReference>
<dbReference type="SMART" id="SM00382">
    <property type="entry name" value="AAA"/>
    <property type="match status" value="1"/>
</dbReference>
<dbReference type="SUPFAM" id="SSF47917">
    <property type="entry name" value="C-terminal domain of alpha and beta subunits of F1 ATP synthase"/>
    <property type="match status" value="1"/>
</dbReference>
<dbReference type="SUPFAM" id="SSF50615">
    <property type="entry name" value="N-terminal domain of alpha and beta subunits of F1 ATP synthase"/>
    <property type="match status" value="1"/>
</dbReference>
<dbReference type="SUPFAM" id="SSF52540">
    <property type="entry name" value="P-loop containing nucleoside triphosphate hydrolases"/>
    <property type="match status" value="1"/>
</dbReference>
<dbReference type="PROSITE" id="PS00152">
    <property type="entry name" value="ATPASE_ALPHA_BETA"/>
    <property type="match status" value="1"/>
</dbReference>
<keyword id="KW-0066">ATP synthesis</keyword>
<keyword id="KW-0067">ATP-binding</keyword>
<keyword id="KW-1003">Cell membrane</keyword>
<keyword id="KW-0139">CF(1)</keyword>
<keyword id="KW-0375">Hydrogen ion transport</keyword>
<keyword id="KW-0406">Ion transport</keyword>
<keyword id="KW-0472">Membrane</keyword>
<keyword id="KW-0547">Nucleotide-binding</keyword>
<keyword id="KW-1185">Reference proteome</keyword>
<keyword id="KW-1278">Translocase</keyword>
<keyword id="KW-0813">Transport</keyword>
<proteinExistence type="inferred from homology"/>
<gene>
    <name evidence="1" type="primary">atpD</name>
    <name type="ordered locus">Acel_0653</name>
</gene>
<reference key="1">
    <citation type="journal article" date="2009" name="Genome Res.">
        <title>Complete genome of the cellulolytic thermophile Acidothermus cellulolyticus 11B provides insights into its ecophysiological and evolutionary adaptations.</title>
        <authorList>
            <person name="Barabote R.D."/>
            <person name="Xie G."/>
            <person name="Leu D.H."/>
            <person name="Normand P."/>
            <person name="Necsulea A."/>
            <person name="Daubin V."/>
            <person name="Medigue C."/>
            <person name="Adney W.S."/>
            <person name="Xu X.C."/>
            <person name="Lapidus A."/>
            <person name="Parales R.E."/>
            <person name="Detter C."/>
            <person name="Pujic P."/>
            <person name="Bruce D."/>
            <person name="Lavire C."/>
            <person name="Challacombe J.F."/>
            <person name="Brettin T.S."/>
            <person name="Berry A.M."/>
        </authorList>
    </citation>
    <scope>NUCLEOTIDE SEQUENCE [LARGE SCALE GENOMIC DNA]</scope>
    <source>
        <strain>ATCC 43068 / DSM 8971 / 11B</strain>
    </source>
</reference>
<organism>
    <name type="scientific">Acidothermus cellulolyticus (strain ATCC 43068 / DSM 8971 / 11B)</name>
    <dbReference type="NCBI Taxonomy" id="351607"/>
    <lineage>
        <taxon>Bacteria</taxon>
        <taxon>Bacillati</taxon>
        <taxon>Actinomycetota</taxon>
        <taxon>Actinomycetes</taxon>
        <taxon>Acidothermales</taxon>
        <taxon>Acidothermaceae</taxon>
        <taxon>Acidothermus</taxon>
    </lineage>
</organism>
<feature type="chain" id="PRO_0000339469" description="ATP synthase subunit beta">
    <location>
        <begin position="1"/>
        <end position="490"/>
    </location>
</feature>
<feature type="binding site" evidence="1">
    <location>
        <begin position="175"/>
        <end position="182"/>
    </location>
    <ligand>
        <name>ATP</name>
        <dbReference type="ChEBI" id="CHEBI:30616"/>
    </ligand>
</feature>
<accession>A0LSL6</accession>